<dbReference type="EMBL" id="X07234">
    <property type="protein sequence ID" value="CAA30196.1"/>
    <property type="molecule type" value="Genomic_DNA"/>
</dbReference>
<dbReference type="PIR" id="S03228">
    <property type="entry name" value="S03228"/>
</dbReference>
<dbReference type="RefSeq" id="NP_039794.1">
    <property type="nucleotide sequence ID" value="NC_001338.1"/>
</dbReference>
<dbReference type="KEGG" id="vg:2559662"/>
<dbReference type="OrthoDB" id="20561at10239"/>
<dbReference type="Proteomes" id="UP000000854">
    <property type="component" value="Genome"/>
</dbReference>
<dbReference type="InterPro" id="IPR043717">
    <property type="entry name" value="DUF5658"/>
</dbReference>
<dbReference type="Pfam" id="PF18902">
    <property type="entry name" value="DUF5658"/>
    <property type="match status" value="1"/>
</dbReference>
<organism>
    <name type="scientific">Sulfolobus spindle-shape virus 1</name>
    <name type="common">SSV1</name>
    <dbReference type="NCBI Taxonomy" id="244589"/>
    <lineage>
        <taxon>Viruses</taxon>
        <taxon>Viruses incertae sedis</taxon>
        <taxon>Fuselloviridae</taxon>
        <taxon>Alphafusellovirus</taxon>
    </lineage>
</organism>
<sequence length="102" mass="11828">MNLIDIILFYGFQFNDYWTTVLGLRVGAEEKNPIAGLFISSPYRLALFKFGLITIGMFILIYVVRFKTWTEIVLTVTDVVECLVTLNNTLTIRRYKRRGVRG</sequence>
<feature type="chain" id="PRO_0000223017" description="Uncharacterized protein C-102a">
    <location>
        <begin position="1"/>
        <end position="102"/>
    </location>
</feature>
<organismHost>
    <name type="scientific">Saccharolobus solfataricus</name>
    <name type="common">Sulfolobus solfataricus</name>
    <dbReference type="NCBI Taxonomy" id="2287"/>
</organismHost>
<proteinExistence type="predicted"/>
<reference key="1">
    <citation type="journal article" date="1991" name="Virology">
        <title>Complete nucleotide sequence of the virus SSV1 of the archaebacterium Sulfolobus shibatae.</title>
        <authorList>
            <person name="Palm P."/>
            <person name="Schleper C."/>
            <person name="Grampp B."/>
            <person name="Yeats S."/>
            <person name="McWilliam P."/>
            <person name="Reiter W.-D."/>
            <person name="Zillig W."/>
        </authorList>
    </citation>
    <scope>NUCLEOTIDE SEQUENCE [GENOMIC DNA]</scope>
</reference>
<name>C102A_SSV1</name>
<protein>
    <recommendedName>
        <fullName>Uncharacterized protein C-102a</fullName>
    </recommendedName>
</protein>
<accession>P20206</accession>
<keyword id="KW-1185">Reference proteome</keyword>
<gene>
    <name type="ORF">c102a</name>
</gene>